<comment type="function">
    <text evidence="3">Template-independent DNA polymerase which catalyzes the random addition of deoxynucleoside 5'-triphosphate to the 3'-end of a DNA initiator. One of the in vivo functions of this enzyme is the addition of nucleotides at the junction (N region) of rearranged Ig heavy chain and T-cell receptor gene segments during the maturation of B- and T-cells.</text>
</comment>
<comment type="catalytic activity">
    <reaction evidence="3">
        <text>DNA(n) + a 2'-deoxyribonucleoside 5'-triphosphate = DNA(n+1) + diphosphate</text>
        <dbReference type="Rhea" id="RHEA:22508"/>
        <dbReference type="Rhea" id="RHEA-COMP:17339"/>
        <dbReference type="Rhea" id="RHEA-COMP:17340"/>
        <dbReference type="ChEBI" id="CHEBI:33019"/>
        <dbReference type="ChEBI" id="CHEBI:61560"/>
        <dbReference type="ChEBI" id="CHEBI:173112"/>
        <dbReference type="EC" id="2.7.7.31"/>
    </reaction>
</comment>
<comment type="cofactor">
    <cofactor evidence="3">
        <name>Mg(2+)</name>
        <dbReference type="ChEBI" id="CHEBI:18420"/>
    </cofactor>
    <text evidence="3">Can also utilize other divalent cations, such as Mn(2+) and Co(2+) (in vitro).</text>
</comment>
<comment type="subcellular location">
    <subcellularLocation>
        <location evidence="1">Nucleus</location>
    </subcellularLocation>
</comment>
<comment type="similarity">
    <text evidence="5">Belongs to the DNA polymerase type-X family.</text>
</comment>
<evidence type="ECO:0000250" key="1">
    <source>
        <dbReference type="UniProtKB" id="P04053"/>
    </source>
</evidence>
<evidence type="ECO:0000250" key="2">
    <source>
        <dbReference type="UniProtKB" id="P06526"/>
    </source>
</evidence>
<evidence type="ECO:0000250" key="3">
    <source>
        <dbReference type="UniProtKB" id="P09838"/>
    </source>
</evidence>
<evidence type="ECO:0000255" key="4">
    <source>
        <dbReference type="PROSITE-ProRule" id="PRU00033"/>
    </source>
</evidence>
<evidence type="ECO:0000305" key="5"/>
<gene>
    <name type="primary">DNTT</name>
    <name type="synonym">TDT</name>
</gene>
<proteinExistence type="evidence at transcript level"/>
<accession>P36195</accession>
<name>TDT_CHICK</name>
<feature type="chain" id="PRO_0000218795" description="DNA nucleotidylexotransferase">
    <location>
        <begin position="1"/>
        <end position="506"/>
    </location>
</feature>
<feature type="domain" description="BRCT" evidence="4">
    <location>
        <begin position="27"/>
        <end position="124"/>
    </location>
</feature>
<feature type="region of interest" description="Involved in DNA binding" evidence="3">
    <location>
        <begin position="258"/>
        <end position="262"/>
    </location>
</feature>
<feature type="short sequence motif" description="Nuclear localization signal" evidence="2">
    <location>
        <begin position="11"/>
        <end position="17"/>
    </location>
</feature>
<feature type="binding site" evidence="3">
    <location>
        <begin position="333"/>
        <end position="338"/>
    </location>
    <ligand>
        <name>a 2'-deoxyribonucleoside 5'-triphosphate</name>
        <dbReference type="ChEBI" id="CHEBI:61560"/>
    </ligand>
</feature>
<feature type="binding site" evidence="3">
    <location>
        <begin position="342"/>
        <end position="345"/>
    </location>
    <ligand>
        <name>a 2'-deoxyribonucleoside 5'-triphosphate</name>
        <dbReference type="ChEBI" id="CHEBI:61560"/>
    </ligand>
</feature>
<feature type="binding site" evidence="3">
    <location>
        <position position="343"/>
    </location>
    <ligand>
        <name>Mg(2+)</name>
        <dbReference type="ChEBI" id="CHEBI:18420"/>
    </ligand>
</feature>
<feature type="binding site" evidence="3">
    <location>
        <position position="345"/>
    </location>
    <ligand>
        <name>Mg(2+)</name>
        <dbReference type="ChEBI" id="CHEBI:18420"/>
    </ligand>
</feature>
<feature type="binding site" evidence="3">
    <location>
        <position position="430"/>
    </location>
    <ligand>
        <name>Mg(2+)</name>
        <dbReference type="ChEBI" id="CHEBI:18420"/>
    </ligand>
</feature>
<feature type="binding site" evidence="3">
    <location>
        <begin position="445"/>
        <end position="446"/>
    </location>
    <ligand>
        <name>a 2'-deoxyribonucleoside 5'-triphosphate</name>
        <dbReference type="ChEBI" id="CHEBI:61560"/>
    </ligand>
</feature>
<sequence length="506" mass="58447">MERIRPPTVVSQRKRQKGMYSPKLSCGYEIKFNKLVIFIMQRKMGMTRRTFLMELARSKGFRVESELSDSVTHIVAENNSYPEVLDWLKGQAVGDSSRFEILDISWLTACMEMGRPVDLEKKYHLVEQAGQYPTLKTPESEVSSFTASKVSQYSCQRKTTLNNCNKKFTDAFEIMAENYEFKENEIFCLEFLRAASVLKSLPFPVTRMKDIQGLPCMGDRVRDVIEEIIEEGESSRAKDVLNDERYKSFKEFTSVFGVGVKTSEKWFRMGLRTVEEVKADKTLKLSKMQRAGFLYYEDLVSCVSKAEADAVSSIVKNTVCTFLPDALVTITGGFRRGKKIGHDIDFLITSPGQREDDELLHKGLLLYCDIIESTFVKEQIPSRHVDAMDHFQKCFAILKLYQPRVDNSSYNMSKKCDMAEVKDWKAIRVDLVITPFEQYAYALLGWTGSRQFGRDLRRYATHERKMMLDNHALYDKRKRVFLKAGSEEEIFAHLGLDYVEPWERNA</sequence>
<organism>
    <name type="scientific">Gallus gallus</name>
    <name type="common">Chicken</name>
    <dbReference type="NCBI Taxonomy" id="9031"/>
    <lineage>
        <taxon>Eukaryota</taxon>
        <taxon>Metazoa</taxon>
        <taxon>Chordata</taxon>
        <taxon>Craniata</taxon>
        <taxon>Vertebrata</taxon>
        <taxon>Euteleostomi</taxon>
        <taxon>Archelosauria</taxon>
        <taxon>Archosauria</taxon>
        <taxon>Dinosauria</taxon>
        <taxon>Saurischia</taxon>
        <taxon>Theropoda</taxon>
        <taxon>Coelurosauria</taxon>
        <taxon>Aves</taxon>
        <taxon>Neognathae</taxon>
        <taxon>Galloanserae</taxon>
        <taxon>Galliformes</taxon>
        <taxon>Phasianidae</taxon>
        <taxon>Phasianinae</taxon>
        <taxon>Gallus</taxon>
    </lineage>
</organism>
<protein>
    <recommendedName>
        <fullName>DNA nucleotidylexotransferase</fullName>
        <ecNumber>2.7.7.31</ecNumber>
    </recommendedName>
    <alternativeName>
        <fullName>Terminal addition enzyme</fullName>
    </alternativeName>
    <alternativeName>
        <fullName>Terminal deoxynucleotidyltransferase</fullName>
        <shortName>Terminal transferase</shortName>
    </alternativeName>
</protein>
<reference key="1">
    <citation type="journal article" date="1995" name="Nucleic Acids Res.">
        <title>T-cell specific avian TdT: characterization of the cDNA and recombinant enzyme.</title>
        <authorList>
            <person name="Yang B."/>
            <person name="Gathy K.N."/>
            <person name="Coleman M.S."/>
        </authorList>
    </citation>
    <scope>NUCLEOTIDE SEQUENCE [MRNA]</scope>
    <source>
        <tissue>Thymus</tissue>
    </source>
</reference>
<dbReference type="EC" id="2.7.7.31"/>
<dbReference type="EMBL" id="U06938">
    <property type="protein sequence ID" value="AAA75280.1"/>
    <property type="molecule type" value="mRNA"/>
</dbReference>
<dbReference type="PIR" id="S55786">
    <property type="entry name" value="S55786"/>
</dbReference>
<dbReference type="RefSeq" id="NP_990720.1">
    <property type="nucleotide sequence ID" value="NM_205389.1"/>
</dbReference>
<dbReference type="SMR" id="P36195"/>
<dbReference type="FunCoup" id="P36195">
    <property type="interactions" value="8"/>
</dbReference>
<dbReference type="STRING" id="9031.ENSGALP00000032645"/>
<dbReference type="PaxDb" id="9031-ENSGALP00000032645"/>
<dbReference type="Ensembl" id="ENSGALT00010052642.1">
    <property type="protein sequence ID" value="ENSGALP00010031548.1"/>
    <property type="gene ID" value="ENSGALG00010021672.1"/>
</dbReference>
<dbReference type="GeneID" id="396351"/>
<dbReference type="KEGG" id="gga:396351"/>
<dbReference type="CTD" id="1791"/>
<dbReference type="VEuPathDB" id="HostDB:geneid_396351"/>
<dbReference type="eggNOG" id="KOG2534">
    <property type="taxonomic scope" value="Eukaryota"/>
</dbReference>
<dbReference type="GeneTree" id="ENSGT00940000158584"/>
<dbReference type="InParanoid" id="P36195"/>
<dbReference type="OrthoDB" id="205514at2759"/>
<dbReference type="PhylomeDB" id="P36195"/>
<dbReference type="PRO" id="PR:P36195"/>
<dbReference type="Proteomes" id="UP000000539">
    <property type="component" value="Chromosome 6"/>
</dbReference>
<dbReference type="GO" id="GO:0005634">
    <property type="term" value="C:nucleus"/>
    <property type="evidence" value="ECO:0000250"/>
    <property type="project" value="UniProtKB"/>
</dbReference>
<dbReference type="GO" id="GO:0003677">
    <property type="term" value="F:DNA binding"/>
    <property type="evidence" value="ECO:0007669"/>
    <property type="project" value="InterPro"/>
</dbReference>
<dbReference type="GO" id="GO:0003912">
    <property type="term" value="F:DNA nucleotidylexotransferase activity"/>
    <property type="evidence" value="ECO:0000250"/>
    <property type="project" value="UniProtKB"/>
</dbReference>
<dbReference type="GO" id="GO:0003887">
    <property type="term" value="F:DNA-directed DNA polymerase activity"/>
    <property type="evidence" value="ECO:0007669"/>
    <property type="project" value="InterPro"/>
</dbReference>
<dbReference type="GO" id="GO:0046872">
    <property type="term" value="F:metal ion binding"/>
    <property type="evidence" value="ECO:0007669"/>
    <property type="project" value="UniProtKB-KW"/>
</dbReference>
<dbReference type="GO" id="GO:0006259">
    <property type="term" value="P:DNA metabolic process"/>
    <property type="evidence" value="ECO:0000250"/>
    <property type="project" value="UniProtKB"/>
</dbReference>
<dbReference type="GO" id="GO:0006304">
    <property type="term" value="P:DNA modification"/>
    <property type="evidence" value="ECO:0007669"/>
    <property type="project" value="UniProtKB-KW"/>
</dbReference>
<dbReference type="GO" id="GO:0006303">
    <property type="term" value="P:double-strand break repair via nonhomologous end joining"/>
    <property type="evidence" value="ECO:0000318"/>
    <property type="project" value="GO_Central"/>
</dbReference>
<dbReference type="CDD" id="cd18443">
    <property type="entry name" value="BRCT_DNTT"/>
    <property type="match status" value="1"/>
</dbReference>
<dbReference type="CDD" id="cd00141">
    <property type="entry name" value="NT_POLXc"/>
    <property type="match status" value="1"/>
</dbReference>
<dbReference type="FunFam" id="3.30.210.10:FF:000003">
    <property type="entry name" value="DNA nucleotidylexotransferase"/>
    <property type="match status" value="1"/>
</dbReference>
<dbReference type="FunFam" id="3.40.50.10190:FF:000041">
    <property type="entry name" value="DNA nucleotidylexotransferase"/>
    <property type="match status" value="1"/>
</dbReference>
<dbReference type="FunFam" id="1.10.150.20:FF:000010">
    <property type="entry name" value="DNA polymerase lambda"/>
    <property type="match status" value="1"/>
</dbReference>
<dbReference type="FunFam" id="1.10.150.110:FF:000003">
    <property type="entry name" value="DNA polymerase mu"/>
    <property type="match status" value="1"/>
</dbReference>
<dbReference type="Gene3D" id="1.10.150.20">
    <property type="entry name" value="5' to 3' exonuclease, C-terminal subdomain"/>
    <property type="match status" value="1"/>
</dbReference>
<dbReference type="Gene3D" id="3.30.460.10">
    <property type="entry name" value="Beta Polymerase, domain 2"/>
    <property type="match status" value="1"/>
</dbReference>
<dbReference type="Gene3D" id="3.40.50.10190">
    <property type="entry name" value="BRCT domain"/>
    <property type="match status" value="1"/>
</dbReference>
<dbReference type="Gene3D" id="1.10.150.110">
    <property type="entry name" value="DNA polymerase beta, N-terminal domain-like"/>
    <property type="match status" value="1"/>
</dbReference>
<dbReference type="Gene3D" id="3.30.210.10">
    <property type="entry name" value="DNA polymerase, thumb domain"/>
    <property type="match status" value="1"/>
</dbReference>
<dbReference type="InterPro" id="IPR001357">
    <property type="entry name" value="BRCT_dom"/>
</dbReference>
<dbReference type="InterPro" id="IPR036420">
    <property type="entry name" value="BRCT_dom_sf"/>
</dbReference>
<dbReference type="InterPro" id="IPR002054">
    <property type="entry name" value="DNA-dir_DNA_pol_X"/>
</dbReference>
<dbReference type="InterPro" id="IPR019843">
    <property type="entry name" value="DNA_pol-X_BS"/>
</dbReference>
<dbReference type="InterPro" id="IPR010996">
    <property type="entry name" value="DNA_pol_b-like_N"/>
</dbReference>
<dbReference type="InterPro" id="IPR028207">
    <property type="entry name" value="DNA_pol_B_palm_palm"/>
</dbReference>
<dbReference type="InterPro" id="IPR018944">
    <property type="entry name" value="DNA_pol_lambd_fingers_domain"/>
</dbReference>
<dbReference type="InterPro" id="IPR027421">
    <property type="entry name" value="DNA_pol_lamdba_lyase_dom_sf"/>
</dbReference>
<dbReference type="InterPro" id="IPR037160">
    <property type="entry name" value="DNA_Pol_thumb_sf"/>
</dbReference>
<dbReference type="InterPro" id="IPR022312">
    <property type="entry name" value="DNA_pol_X"/>
</dbReference>
<dbReference type="InterPro" id="IPR043519">
    <property type="entry name" value="NT_sf"/>
</dbReference>
<dbReference type="InterPro" id="IPR029398">
    <property type="entry name" value="PolB_thumb"/>
</dbReference>
<dbReference type="InterPro" id="IPR027292">
    <property type="entry name" value="TdT"/>
</dbReference>
<dbReference type="InterPro" id="IPR001726">
    <property type="entry name" value="TdT/Mu"/>
</dbReference>
<dbReference type="PANTHER" id="PTHR11276:SF21">
    <property type="entry name" value="DNA NUCLEOTIDYLEXOTRANSFERASE"/>
    <property type="match status" value="1"/>
</dbReference>
<dbReference type="PANTHER" id="PTHR11276">
    <property type="entry name" value="DNA POLYMERASE TYPE-X FAMILY MEMBER"/>
    <property type="match status" value="1"/>
</dbReference>
<dbReference type="Pfam" id="PF00533">
    <property type="entry name" value="BRCT"/>
    <property type="match status" value="1"/>
</dbReference>
<dbReference type="Pfam" id="PF14792">
    <property type="entry name" value="DNA_pol_B_palm"/>
    <property type="match status" value="1"/>
</dbReference>
<dbReference type="Pfam" id="PF14791">
    <property type="entry name" value="DNA_pol_B_thumb"/>
    <property type="match status" value="1"/>
</dbReference>
<dbReference type="Pfam" id="PF10391">
    <property type="entry name" value="DNA_pol_lambd_f"/>
    <property type="match status" value="1"/>
</dbReference>
<dbReference type="Pfam" id="PF14716">
    <property type="entry name" value="HHH_8"/>
    <property type="match status" value="1"/>
</dbReference>
<dbReference type="PIRSF" id="PIRSF000817">
    <property type="entry name" value="DNA_NT"/>
    <property type="match status" value="1"/>
</dbReference>
<dbReference type="PIRSF" id="PIRSF501175">
    <property type="entry name" value="TDT"/>
    <property type="match status" value="1"/>
</dbReference>
<dbReference type="PRINTS" id="PR00869">
    <property type="entry name" value="DNAPOLX"/>
</dbReference>
<dbReference type="PRINTS" id="PR00871">
    <property type="entry name" value="DNAPOLXTDT"/>
</dbReference>
<dbReference type="SMART" id="SM00292">
    <property type="entry name" value="BRCT"/>
    <property type="match status" value="1"/>
</dbReference>
<dbReference type="SMART" id="SM00483">
    <property type="entry name" value="POLXc"/>
    <property type="match status" value="1"/>
</dbReference>
<dbReference type="SUPFAM" id="SSF52113">
    <property type="entry name" value="BRCT domain"/>
    <property type="match status" value="1"/>
</dbReference>
<dbReference type="SUPFAM" id="SSF47802">
    <property type="entry name" value="DNA polymerase beta, N-terminal domain-like"/>
    <property type="match status" value="1"/>
</dbReference>
<dbReference type="SUPFAM" id="SSF81301">
    <property type="entry name" value="Nucleotidyltransferase"/>
    <property type="match status" value="1"/>
</dbReference>
<dbReference type="SUPFAM" id="SSF81585">
    <property type="entry name" value="PsbU/PolX domain-like"/>
    <property type="match status" value="1"/>
</dbReference>
<dbReference type="PROSITE" id="PS50172">
    <property type="entry name" value="BRCT"/>
    <property type="match status" value="1"/>
</dbReference>
<dbReference type="PROSITE" id="PS00522">
    <property type="entry name" value="DNA_POLYMERASE_X"/>
    <property type="match status" value="1"/>
</dbReference>
<keyword id="KW-0460">Magnesium</keyword>
<keyword id="KW-0479">Metal-binding</keyword>
<keyword id="KW-0548">Nucleotidyltransferase</keyword>
<keyword id="KW-0539">Nucleus</keyword>
<keyword id="KW-1185">Reference proteome</keyword>
<keyword id="KW-0780">Terminal addition</keyword>
<keyword id="KW-0808">Transferase</keyword>